<proteinExistence type="inferred from homology"/>
<dbReference type="EMBL" id="Z82271">
    <property type="protein sequence ID" value="CAB05211.1"/>
    <property type="molecule type" value="Genomic_DNA"/>
</dbReference>
<dbReference type="EMBL" id="FO081135">
    <property type="protein sequence ID" value="CCD69391.1"/>
    <property type="molecule type" value="Genomic_DNA"/>
</dbReference>
<dbReference type="EMBL" id="Z73102">
    <property type="protein sequence ID" value="CAA97413.1"/>
    <property type="molecule type" value="Genomic_DNA"/>
</dbReference>
<dbReference type="EMBL" id="Z92789">
    <property type="protein sequence ID" value="CAB07220.1"/>
    <property type="molecule type" value="Genomic_DNA"/>
</dbReference>
<dbReference type="PIR" id="F88730">
    <property type="entry name" value="F88730"/>
</dbReference>
<dbReference type="RefSeq" id="NP_501202.1">
    <property type="nucleotide sequence ID" value="NM_068801.1"/>
</dbReference>
<dbReference type="RefSeq" id="NP_502132.1">
    <property type="nucleotide sequence ID" value="NM_069731.6"/>
</dbReference>
<dbReference type="RefSeq" id="NP_502140.1">
    <property type="nucleotide sequence ID" value="NM_069739.5"/>
</dbReference>
<dbReference type="RefSeq" id="NP_502149.1">
    <property type="nucleotide sequence ID" value="NM_069748.1"/>
</dbReference>
<dbReference type="SMR" id="Q27876"/>
<dbReference type="BioGRID" id="43148">
    <property type="interactions" value="5"/>
</dbReference>
<dbReference type="BioGRID" id="51070">
    <property type="interactions" value="1"/>
</dbReference>
<dbReference type="BioGRID" id="51393">
    <property type="interactions" value="6"/>
</dbReference>
<dbReference type="FunCoup" id="Q27876">
    <property type="interactions" value="1020"/>
</dbReference>
<dbReference type="STRING" id="6239.B0035.8.1"/>
<dbReference type="GlyCosmos" id="Q27876">
    <property type="glycosylation" value="1 site, No reported glycans"/>
</dbReference>
<dbReference type="PaxDb" id="6239-B0035.8"/>
<dbReference type="PeptideAtlas" id="Q27876"/>
<dbReference type="EnsemblMetazoa" id="B0035.8.1">
    <property type="protein sequence ID" value="B0035.8.1"/>
    <property type="gene ID" value="WBGene00001922"/>
</dbReference>
<dbReference type="EnsemblMetazoa" id="F54E12.4.1">
    <property type="protein sequence ID" value="F54E12.4.1"/>
    <property type="gene ID" value="WBGene00001932"/>
</dbReference>
<dbReference type="EnsemblMetazoa" id="F55G1.3.1">
    <property type="protein sequence ID" value="F55G1.3.1"/>
    <property type="gene ID" value="WBGene00001936"/>
</dbReference>
<dbReference type="EnsemblMetazoa" id="H02I12.6.1">
    <property type="protein sequence ID" value="H02I12.6.1"/>
    <property type="gene ID" value="WBGene00001940"/>
</dbReference>
<dbReference type="GeneID" id="178049"/>
<dbReference type="GeneID" id="186251"/>
<dbReference type="GeneID" id="186326"/>
<dbReference type="GeneID" id="186670"/>
<dbReference type="KEGG" id="cel:CELE_B0035.8"/>
<dbReference type="KEGG" id="cel:CELE_F54E12.4"/>
<dbReference type="KEGG" id="cel:CELE_F55G1.3"/>
<dbReference type="KEGG" id="cel:CELE_H02I12.6"/>
<dbReference type="UCSC" id="F55G1.3">
    <property type="organism name" value="c. elegans"/>
</dbReference>
<dbReference type="AGR" id="WB:WBGene00001922"/>
<dbReference type="AGR" id="WB:WBGene00001932"/>
<dbReference type="AGR" id="WB:WBGene00001936"/>
<dbReference type="AGR" id="WB:WBGene00001940"/>
<dbReference type="CTD" id="178049"/>
<dbReference type="CTD" id="186251"/>
<dbReference type="CTD" id="186326"/>
<dbReference type="CTD" id="186670"/>
<dbReference type="WormBase" id="B0035.8">
    <property type="protein sequence ID" value="CE05165"/>
    <property type="gene ID" value="WBGene00001922"/>
    <property type="gene designation" value="his-48"/>
</dbReference>
<dbReference type="WormBase" id="F54E12.4">
    <property type="protein sequence ID" value="CE05165"/>
    <property type="gene ID" value="WBGene00001932"/>
    <property type="gene designation" value="his-58"/>
</dbReference>
<dbReference type="WormBase" id="F55G1.3">
    <property type="protein sequence ID" value="CE05165"/>
    <property type="gene ID" value="WBGene00001936"/>
    <property type="gene designation" value="his-62"/>
</dbReference>
<dbReference type="WormBase" id="H02I12.6">
    <property type="protein sequence ID" value="CE05165"/>
    <property type="gene ID" value="WBGene00001940"/>
    <property type="gene designation" value="his-66"/>
</dbReference>
<dbReference type="eggNOG" id="KOG1744">
    <property type="taxonomic scope" value="Eukaryota"/>
</dbReference>
<dbReference type="GeneTree" id="ENSGT01130000278348"/>
<dbReference type="HOGENOM" id="CLU_075666_2_1_1"/>
<dbReference type="InParanoid" id="Q27876"/>
<dbReference type="OMA" id="RITIEAC"/>
<dbReference type="OrthoDB" id="5807605at2759"/>
<dbReference type="PhylomeDB" id="Q27876"/>
<dbReference type="PRO" id="PR:Q27876"/>
<dbReference type="Proteomes" id="UP000001940">
    <property type="component" value="Chromosome IV"/>
</dbReference>
<dbReference type="Bgee" id="WBGene00001922">
    <property type="expression patterns" value="Expressed in pharyngeal muscle cell (C elegans) and 4 other cell types or tissues"/>
</dbReference>
<dbReference type="GO" id="GO:0000786">
    <property type="term" value="C:nucleosome"/>
    <property type="evidence" value="ECO:0007669"/>
    <property type="project" value="UniProtKB-KW"/>
</dbReference>
<dbReference type="GO" id="GO:0005634">
    <property type="term" value="C:nucleus"/>
    <property type="evidence" value="ECO:0007669"/>
    <property type="project" value="UniProtKB-SubCell"/>
</dbReference>
<dbReference type="GO" id="GO:0003677">
    <property type="term" value="F:DNA binding"/>
    <property type="evidence" value="ECO:0000318"/>
    <property type="project" value="GO_Central"/>
</dbReference>
<dbReference type="GO" id="GO:0046982">
    <property type="term" value="F:protein heterodimerization activity"/>
    <property type="evidence" value="ECO:0007669"/>
    <property type="project" value="InterPro"/>
</dbReference>
<dbReference type="GO" id="GO:0044877">
    <property type="term" value="F:protein-containing complex binding"/>
    <property type="evidence" value="ECO:0000250"/>
    <property type="project" value="UniProtKB"/>
</dbReference>
<dbReference type="GO" id="GO:0030527">
    <property type="term" value="F:structural constituent of chromatin"/>
    <property type="evidence" value="ECO:0007669"/>
    <property type="project" value="InterPro"/>
</dbReference>
<dbReference type="GO" id="GO:0045087">
    <property type="term" value="P:innate immune response"/>
    <property type="evidence" value="ECO:0000270"/>
    <property type="project" value="WormBase"/>
</dbReference>
<dbReference type="CDD" id="cd22910">
    <property type="entry name" value="HFD_H2B"/>
    <property type="match status" value="1"/>
</dbReference>
<dbReference type="FunFam" id="1.10.20.10:FF:000016">
    <property type="entry name" value="Histone H2B"/>
    <property type="match status" value="1"/>
</dbReference>
<dbReference type="Gene3D" id="1.10.20.10">
    <property type="entry name" value="Histone, subunit A"/>
    <property type="match status" value="1"/>
</dbReference>
<dbReference type="InterPro" id="IPR009072">
    <property type="entry name" value="Histone-fold"/>
</dbReference>
<dbReference type="InterPro" id="IPR007125">
    <property type="entry name" value="Histone_H2A/H2B/H3"/>
</dbReference>
<dbReference type="InterPro" id="IPR000558">
    <property type="entry name" value="Histone_H2B"/>
</dbReference>
<dbReference type="InterPro" id="IPR055333">
    <property type="entry name" value="HISTONE_H2B_site"/>
</dbReference>
<dbReference type="PANTHER" id="PTHR23428">
    <property type="entry name" value="HISTONE H2B"/>
    <property type="match status" value="1"/>
</dbReference>
<dbReference type="Pfam" id="PF00125">
    <property type="entry name" value="Histone"/>
    <property type="match status" value="1"/>
</dbReference>
<dbReference type="PRINTS" id="PR00621">
    <property type="entry name" value="HISTONEH2B"/>
</dbReference>
<dbReference type="SMART" id="SM00427">
    <property type="entry name" value="H2B"/>
    <property type="match status" value="1"/>
</dbReference>
<dbReference type="SUPFAM" id="SSF47113">
    <property type="entry name" value="Histone-fold"/>
    <property type="match status" value="1"/>
</dbReference>
<dbReference type="PROSITE" id="PS00357">
    <property type="entry name" value="HISTONE_H2B"/>
    <property type="match status" value="1"/>
</dbReference>
<gene>
    <name type="primary">his-48</name>
    <name type="ORF">B0035.8</name>
</gene>
<gene>
    <name type="primary">his-58</name>
    <name type="ORF">F54E12.4</name>
</gene>
<gene>
    <name type="primary">his-62</name>
    <name type="ORF">F55G1.3</name>
</gene>
<gene>
    <name type="primary">his-66</name>
    <name type="ORF">H02I12.6</name>
</gene>
<keyword id="KW-0158">Chromosome</keyword>
<keyword id="KW-0238">DNA-binding</keyword>
<keyword id="KW-0325">Glycoprotein</keyword>
<keyword id="KW-1017">Isopeptide bond</keyword>
<keyword id="KW-0544">Nucleosome core</keyword>
<keyword id="KW-0539">Nucleus</keyword>
<keyword id="KW-1185">Reference proteome</keyword>
<keyword id="KW-0832">Ubl conjugation</keyword>
<protein>
    <recommendedName>
        <fullName>Probable histone H2B 4</fullName>
    </recommendedName>
</protein>
<sequence>MPPKPSAKGAKKAAKTVVAKPKDGKKRRHARKESYSVYIYRVLKQVHPDTGVSSKAMSIMNSFVNDVFERIASEASRLAHYNKRSTISSREIQTAVRLILPGELAKHAVSEGTKAVTKYTSSK</sequence>
<comment type="function">
    <text>Core component of nucleosome. Nucleosomes wrap and compact DNA into chromatin, limiting DNA accessibility to the cellular machineries which require DNA as a template. Histones thereby play a central role in transcription regulation, DNA repair, DNA replication and chromosomal stability. DNA accessibility is regulated via a complex set of post-translational modifications of histones, also called histone code, and nucleosome remodeling.</text>
</comment>
<comment type="subunit">
    <text>The nucleosome is a histone octamer containing two molecules each of H2A, H2B, H3 and H4 assembled in one H3-H4 heterotetramer and two H2A-H2B heterodimers. The octamer wraps approximately 147 bp of DNA.</text>
</comment>
<comment type="subcellular location">
    <subcellularLocation>
        <location>Nucleus</location>
    </subcellularLocation>
    <subcellularLocation>
        <location>Chromosome</location>
    </subcellularLocation>
</comment>
<comment type="PTM">
    <text evidence="1">Monoubiquitination of Lys-118 gives a specific tag for epigenetic transcriptional activation and is also prerequisite for histone H3 'Lys-4' and 'Lys-79' methylation.</text>
</comment>
<comment type="PTM">
    <text evidence="1">GlcNAcylation at Ser-110 promotes monoubiquitination of Lys-118. It fluctuates in response to extracellular glucose, and associates with transcribed genes (By similarity).</text>
</comment>
<comment type="similarity">
    <text evidence="3">Belongs to the histone H2B family.</text>
</comment>
<organism>
    <name type="scientific">Caenorhabditis elegans</name>
    <dbReference type="NCBI Taxonomy" id="6239"/>
    <lineage>
        <taxon>Eukaryota</taxon>
        <taxon>Metazoa</taxon>
        <taxon>Ecdysozoa</taxon>
        <taxon>Nematoda</taxon>
        <taxon>Chromadorea</taxon>
        <taxon>Rhabditida</taxon>
        <taxon>Rhabditina</taxon>
        <taxon>Rhabditomorpha</taxon>
        <taxon>Rhabditoidea</taxon>
        <taxon>Rhabditidae</taxon>
        <taxon>Peloderinae</taxon>
        <taxon>Caenorhabditis</taxon>
    </lineage>
</organism>
<evidence type="ECO:0000250" key="1"/>
<evidence type="ECO:0000256" key="2">
    <source>
        <dbReference type="SAM" id="MobiDB-lite"/>
    </source>
</evidence>
<evidence type="ECO:0000305" key="3"/>
<reference key="1">
    <citation type="journal article" date="1998" name="Science">
        <title>Genome sequence of the nematode C. elegans: a platform for investigating biology.</title>
        <authorList>
            <consortium name="The C. elegans sequencing consortium"/>
        </authorList>
    </citation>
    <scope>NUCLEOTIDE SEQUENCE [LARGE SCALE GENOMIC DNA]</scope>
    <source>
        <strain>Bristol N2</strain>
    </source>
</reference>
<name>H2B4_CAEEL</name>
<accession>Q27876</accession>
<feature type="initiator methionine" description="Removed" evidence="1">
    <location>
        <position position="1"/>
    </location>
</feature>
<feature type="chain" id="PRO_0000071870" description="Probable histone H2B 4">
    <location>
        <begin position="2"/>
        <end position="123"/>
    </location>
</feature>
<feature type="region of interest" description="Disordered" evidence="2">
    <location>
        <begin position="1"/>
        <end position="30"/>
    </location>
</feature>
<feature type="glycosylation site" description="O-linked (GlcNAc) serine" evidence="1">
    <location>
        <position position="110"/>
    </location>
</feature>
<feature type="cross-link" description="Glycyl lysine isopeptide (Lys-Gly) (interchain with G-Cter in ubiquitin)" evidence="1">
    <location>
        <position position="118"/>
    </location>
</feature>